<keyword id="KW-1185">Reference proteome</keyword>
<accession>Q9PQZ8</accession>
<sequence>MINNIFNKKLLVYNEKDQRWYNKFDRTKPLFSPSRLLSFKNYIFEKIPAKNLEYPIEFGTSLMQIIQYYFENQSKLDVILNSINEEKLKEVFLLFLDYLKTNDYSLIAVELHLFSPKLNHYWHGFADVVVKTKDDKYKVLEIKTHNEIQSVPSWKFQAGVYDYIISQELSNYEPSAILAFSRKQAKLSVYENDSLDLSFINKINELYS</sequence>
<gene>
    <name type="ordered locus">UU146</name>
</gene>
<reference key="1">
    <citation type="journal article" date="2000" name="Nature">
        <title>The complete sequence of the mucosal pathogen Ureaplasma urealyticum.</title>
        <authorList>
            <person name="Glass J.I."/>
            <person name="Lefkowitz E.J."/>
            <person name="Glass J.S."/>
            <person name="Heiner C.R."/>
            <person name="Chen E.Y."/>
            <person name="Cassell G.H."/>
        </authorList>
    </citation>
    <scope>NUCLEOTIDE SEQUENCE [LARGE SCALE GENOMIC DNA]</scope>
    <source>
        <strain>ATCC 700970</strain>
    </source>
</reference>
<feature type="chain" id="PRO_0000220805" description="Uncharacterized protein UU146">
    <location>
        <begin position="1"/>
        <end position="208"/>
    </location>
</feature>
<name>Y146_UREPA</name>
<proteinExistence type="predicted"/>
<protein>
    <recommendedName>
        <fullName>Uncharacterized protein UU146</fullName>
    </recommendedName>
</protein>
<dbReference type="EMBL" id="AF222894">
    <property type="protein sequence ID" value="AAF30552.1"/>
    <property type="molecule type" value="Genomic_DNA"/>
</dbReference>
<dbReference type="RefSeq" id="WP_004025921.1">
    <property type="nucleotide sequence ID" value="NC_002162.1"/>
</dbReference>
<dbReference type="STRING" id="273119.UU146"/>
<dbReference type="EnsemblBacteria" id="AAF30552">
    <property type="protein sequence ID" value="AAF30552"/>
    <property type="gene ID" value="UU146"/>
</dbReference>
<dbReference type="KEGG" id="uur:UU146"/>
<dbReference type="HOGENOM" id="CLU_1320412_0_0_14"/>
<dbReference type="OrthoDB" id="9879172at2"/>
<dbReference type="Proteomes" id="UP000000423">
    <property type="component" value="Chromosome"/>
</dbReference>
<dbReference type="Gene3D" id="3.90.320.10">
    <property type="match status" value="1"/>
</dbReference>
<dbReference type="InterPro" id="IPR011604">
    <property type="entry name" value="PDDEXK-like_dom_sf"/>
</dbReference>
<organism>
    <name type="scientific">Ureaplasma parvum serovar 3 (strain ATCC 700970)</name>
    <dbReference type="NCBI Taxonomy" id="273119"/>
    <lineage>
        <taxon>Bacteria</taxon>
        <taxon>Bacillati</taxon>
        <taxon>Mycoplasmatota</taxon>
        <taxon>Mycoplasmoidales</taxon>
        <taxon>Mycoplasmoidaceae</taxon>
        <taxon>Ureaplasma</taxon>
    </lineage>
</organism>